<protein>
    <recommendedName>
        <fullName evidence="1">Elongation factor Ts</fullName>
        <shortName evidence="1">EF-Ts</shortName>
    </recommendedName>
</protein>
<comment type="function">
    <text evidence="1">Associates with the EF-Tu.GDP complex and induces the exchange of GDP to GTP. It remains bound to the aminoacyl-tRNA.EF-Tu.GTP complex up to the GTP hydrolysis stage on the ribosome.</text>
</comment>
<comment type="subcellular location">
    <subcellularLocation>
        <location evidence="1">Cytoplasm</location>
    </subcellularLocation>
</comment>
<comment type="similarity">
    <text evidence="1">Belongs to the EF-Ts family.</text>
</comment>
<name>EFTS_XANOM</name>
<proteinExistence type="inferred from homology"/>
<evidence type="ECO:0000255" key="1">
    <source>
        <dbReference type="HAMAP-Rule" id="MF_00050"/>
    </source>
</evidence>
<organism>
    <name type="scientific">Xanthomonas oryzae pv. oryzae (strain MAFF 311018)</name>
    <dbReference type="NCBI Taxonomy" id="342109"/>
    <lineage>
        <taxon>Bacteria</taxon>
        <taxon>Pseudomonadati</taxon>
        <taxon>Pseudomonadota</taxon>
        <taxon>Gammaproteobacteria</taxon>
        <taxon>Lysobacterales</taxon>
        <taxon>Lysobacteraceae</taxon>
        <taxon>Xanthomonas</taxon>
    </lineage>
</organism>
<reference key="1">
    <citation type="journal article" date="2005" name="Jpn. Agric. Res. Q.">
        <title>Genome sequence of Xanthomonas oryzae pv. oryzae suggests contribution of large numbers of effector genes and insertion sequences to its race diversity.</title>
        <authorList>
            <person name="Ochiai H."/>
            <person name="Inoue Y."/>
            <person name="Takeya M."/>
            <person name="Sasaki A."/>
            <person name="Kaku H."/>
        </authorList>
    </citation>
    <scope>NUCLEOTIDE SEQUENCE [LARGE SCALE GENOMIC DNA]</scope>
    <source>
        <strain>MAFF 311018</strain>
    </source>
</reference>
<accession>Q2P4A6</accession>
<feature type="chain" id="PRO_0000241554" description="Elongation factor Ts">
    <location>
        <begin position="1"/>
        <end position="292"/>
    </location>
</feature>
<feature type="region of interest" description="Involved in Mg(2+) ion dislocation from EF-Tu" evidence="1">
    <location>
        <begin position="79"/>
        <end position="82"/>
    </location>
</feature>
<gene>
    <name evidence="1" type="primary">tsf</name>
    <name type="ordered locus">XOO1866</name>
</gene>
<dbReference type="EMBL" id="AP008229">
    <property type="protein sequence ID" value="BAE68621.1"/>
    <property type="molecule type" value="Genomic_DNA"/>
</dbReference>
<dbReference type="RefSeq" id="WP_011258700.1">
    <property type="nucleotide sequence ID" value="NC_007705.1"/>
</dbReference>
<dbReference type="SMR" id="Q2P4A6"/>
<dbReference type="KEGG" id="xom:XOO1866"/>
<dbReference type="HOGENOM" id="CLU_047155_0_0_6"/>
<dbReference type="GO" id="GO:0005737">
    <property type="term" value="C:cytoplasm"/>
    <property type="evidence" value="ECO:0007669"/>
    <property type="project" value="UniProtKB-SubCell"/>
</dbReference>
<dbReference type="GO" id="GO:0003746">
    <property type="term" value="F:translation elongation factor activity"/>
    <property type="evidence" value="ECO:0007669"/>
    <property type="project" value="UniProtKB-UniRule"/>
</dbReference>
<dbReference type="CDD" id="cd14275">
    <property type="entry name" value="UBA_EF-Ts"/>
    <property type="match status" value="1"/>
</dbReference>
<dbReference type="FunFam" id="1.10.286.20:FF:000001">
    <property type="entry name" value="Elongation factor Ts"/>
    <property type="match status" value="1"/>
</dbReference>
<dbReference type="FunFam" id="1.10.8.10:FF:000001">
    <property type="entry name" value="Elongation factor Ts"/>
    <property type="match status" value="1"/>
</dbReference>
<dbReference type="FunFam" id="3.30.479.20:FF:000001">
    <property type="entry name" value="Elongation factor Ts"/>
    <property type="match status" value="1"/>
</dbReference>
<dbReference type="Gene3D" id="1.10.286.20">
    <property type="match status" value="1"/>
</dbReference>
<dbReference type="Gene3D" id="1.10.8.10">
    <property type="entry name" value="DNA helicase RuvA subunit, C-terminal domain"/>
    <property type="match status" value="1"/>
</dbReference>
<dbReference type="Gene3D" id="3.30.479.20">
    <property type="entry name" value="Elongation factor Ts, dimerisation domain"/>
    <property type="match status" value="2"/>
</dbReference>
<dbReference type="HAMAP" id="MF_00050">
    <property type="entry name" value="EF_Ts"/>
    <property type="match status" value="1"/>
</dbReference>
<dbReference type="InterPro" id="IPR036402">
    <property type="entry name" value="EF-Ts_dimer_sf"/>
</dbReference>
<dbReference type="InterPro" id="IPR001816">
    <property type="entry name" value="Transl_elong_EFTs/EF1B"/>
</dbReference>
<dbReference type="InterPro" id="IPR014039">
    <property type="entry name" value="Transl_elong_EFTs/EF1B_dimer"/>
</dbReference>
<dbReference type="InterPro" id="IPR018101">
    <property type="entry name" value="Transl_elong_Ts_CS"/>
</dbReference>
<dbReference type="InterPro" id="IPR009060">
    <property type="entry name" value="UBA-like_sf"/>
</dbReference>
<dbReference type="NCBIfam" id="TIGR00116">
    <property type="entry name" value="tsf"/>
    <property type="match status" value="1"/>
</dbReference>
<dbReference type="PANTHER" id="PTHR11741">
    <property type="entry name" value="ELONGATION FACTOR TS"/>
    <property type="match status" value="1"/>
</dbReference>
<dbReference type="PANTHER" id="PTHR11741:SF0">
    <property type="entry name" value="ELONGATION FACTOR TS, MITOCHONDRIAL"/>
    <property type="match status" value="1"/>
</dbReference>
<dbReference type="Pfam" id="PF00889">
    <property type="entry name" value="EF_TS"/>
    <property type="match status" value="1"/>
</dbReference>
<dbReference type="SUPFAM" id="SSF54713">
    <property type="entry name" value="Elongation factor Ts (EF-Ts), dimerisation domain"/>
    <property type="match status" value="2"/>
</dbReference>
<dbReference type="SUPFAM" id="SSF46934">
    <property type="entry name" value="UBA-like"/>
    <property type="match status" value="1"/>
</dbReference>
<dbReference type="PROSITE" id="PS01126">
    <property type="entry name" value="EF_TS_1"/>
    <property type="match status" value="1"/>
</dbReference>
<dbReference type="PROSITE" id="PS01127">
    <property type="entry name" value="EF_TS_2"/>
    <property type="match status" value="1"/>
</dbReference>
<sequence>MEITASLVKELRERTGAGMMECKKALVENAGDIDAAAEWLRKSGLAKADKKADRVAAEGRIATAQAGGKAVLVEVNSETDFVAKDENFLAFTEVVANAALNSDAADAEALKSVKLDSGETIEERRAAVIAKVGENLQVRRLVRIDSANNVAAYVHGGRIGVLVELKGGDIELARGIAMHIAAMNPPHVKASDVPAEFVAKEKEIELAKMSEKDKAKPADILEKIISGKISKIVNEVTLYGQPYVLNTDQTVEQAVKAAGAEVIRFQRLAVGEGIEKVVEDYAAEVMKQAGLA</sequence>
<keyword id="KW-0963">Cytoplasm</keyword>
<keyword id="KW-0251">Elongation factor</keyword>
<keyword id="KW-0648">Protein biosynthesis</keyword>